<sequence length="109" mass="12035">MMLGKKLHVKKNDTVIVITGKDKAKTGKVLQILPKKDGVLVEGINIVKRHTRPRGSEAGAIVEKEAVIHVSNVMIYCNKCGKPVRTRINTLEDGKKVRICVKCGEAFDK</sequence>
<accession>A5GAV3</accession>
<evidence type="ECO:0000255" key="1">
    <source>
        <dbReference type="HAMAP-Rule" id="MF_01326"/>
    </source>
</evidence>
<evidence type="ECO:0000305" key="2"/>
<name>RL24_GEOUR</name>
<dbReference type="EMBL" id="CP000698">
    <property type="protein sequence ID" value="ABQ25283.1"/>
    <property type="molecule type" value="Genomic_DNA"/>
</dbReference>
<dbReference type="SMR" id="A5GAV3"/>
<dbReference type="STRING" id="351605.Gura_1077"/>
<dbReference type="KEGG" id="gur:Gura_1077"/>
<dbReference type="HOGENOM" id="CLU_093315_2_3_7"/>
<dbReference type="Proteomes" id="UP000006695">
    <property type="component" value="Chromosome"/>
</dbReference>
<dbReference type="GO" id="GO:1990904">
    <property type="term" value="C:ribonucleoprotein complex"/>
    <property type="evidence" value="ECO:0007669"/>
    <property type="project" value="UniProtKB-KW"/>
</dbReference>
<dbReference type="GO" id="GO:0005840">
    <property type="term" value="C:ribosome"/>
    <property type="evidence" value="ECO:0007669"/>
    <property type="project" value="UniProtKB-KW"/>
</dbReference>
<dbReference type="GO" id="GO:0019843">
    <property type="term" value="F:rRNA binding"/>
    <property type="evidence" value="ECO:0007669"/>
    <property type="project" value="UniProtKB-UniRule"/>
</dbReference>
<dbReference type="GO" id="GO:0003735">
    <property type="term" value="F:structural constituent of ribosome"/>
    <property type="evidence" value="ECO:0007669"/>
    <property type="project" value="InterPro"/>
</dbReference>
<dbReference type="GO" id="GO:0006412">
    <property type="term" value="P:translation"/>
    <property type="evidence" value="ECO:0007669"/>
    <property type="project" value="UniProtKB-UniRule"/>
</dbReference>
<dbReference type="CDD" id="cd06089">
    <property type="entry name" value="KOW_RPL26"/>
    <property type="match status" value="1"/>
</dbReference>
<dbReference type="FunFam" id="2.30.30.30:FF:000004">
    <property type="entry name" value="50S ribosomal protein L24"/>
    <property type="match status" value="1"/>
</dbReference>
<dbReference type="Gene3D" id="2.30.30.30">
    <property type="match status" value="1"/>
</dbReference>
<dbReference type="HAMAP" id="MF_01326_B">
    <property type="entry name" value="Ribosomal_uL24_B"/>
    <property type="match status" value="1"/>
</dbReference>
<dbReference type="InterPro" id="IPR005824">
    <property type="entry name" value="KOW"/>
</dbReference>
<dbReference type="InterPro" id="IPR014722">
    <property type="entry name" value="Rib_uL2_dom2"/>
</dbReference>
<dbReference type="InterPro" id="IPR003256">
    <property type="entry name" value="Ribosomal_uL24"/>
</dbReference>
<dbReference type="InterPro" id="IPR041988">
    <property type="entry name" value="Ribosomal_uL24_KOW"/>
</dbReference>
<dbReference type="InterPro" id="IPR008991">
    <property type="entry name" value="Translation_prot_SH3-like_sf"/>
</dbReference>
<dbReference type="NCBIfam" id="TIGR01079">
    <property type="entry name" value="rplX_bact"/>
    <property type="match status" value="1"/>
</dbReference>
<dbReference type="PANTHER" id="PTHR12903">
    <property type="entry name" value="MITOCHONDRIAL RIBOSOMAL PROTEIN L24"/>
    <property type="match status" value="1"/>
</dbReference>
<dbReference type="Pfam" id="PF00467">
    <property type="entry name" value="KOW"/>
    <property type="match status" value="1"/>
</dbReference>
<dbReference type="Pfam" id="PF17136">
    <property type="entry name" value="ribosomal_L24"/>
    <property type="match status" value="1"/>
</dbReference>
<dbReference type="SMART" id="SM00739">
    <property type="entry name" value="KOW"/>
    <property type="match status" value="1"/>
</dbReference>
<dbReference type="SUPFAM" id="SSF50104">
    <property type="entry name" value="Translation proteins SH3-like domain"/>
    <property type="match status" value="1"/>
</dbReference>
<proteinExistence type="inferred from homology"/>
<keyword id="KW-1185">Reference proteome</keyword>
<keyword id="KW-0687">Ribonucleoprotein</keyword>
<keyword id="KW-0689">Ribosomal protein</keyword>
<keyword id="KW-0694">RNA-binding</keyword>
<keyword id="KW-0699">rRNA-binding</keyword>
<protein>
    <recommendedName>
        <fullName evidence="1">Large ribosomal subunit protein uL24</fullName>
    </recommendedName>
    <alternativeName>
        <fullName evidence="2">50S ribosomal protein L24</fullName>
    </alternativeName>
</protein>
<comment type="function">
    <text evidence="1">One of two assembly initiator proteins, it binds directly to the 5'-end of the 23S rRNA, where it nucleates assembly of the 50S subunit.</text>
</comment>
<comment type="function">
    <text evidence="1">One of the proteins that surrounds the polypeptide exit tunnel on the outside of the subunit.</text>
</comment>
<comment type="subunit">
    <text evidence="1">Part of the 50S ribosomal subunit.</text>
</comment>
<comment type="similarity">
    <text evidence="1">Belongs to the universal ribosomal protein uL24 family.</text>
</comment>
<gene>
    <name evidence="1" type="primary">rplX</name>
    <name type="ordered locus">Gura_1077</name>
</gene>
<feature type="chain" id="PRO_0000355684" description="Large ribosomal subunit protein uL24">
    <location>
        <begin position="1"/>
        <end position="109"/>
    </location>
</feature>
<organism>
    <name type="scientific">Geotalea uraniireducens (strain Rf4)</name>
    <name type="common">Geobacter uraniireducens</name>
    <dbReference type="NCBI Taxonomy" id="351605"/>
    <lineage>
        <taxon>Bacteria</taxon>
        <taxon>Pseudomonadati</taxon>
        <taxon>Thermodesulfobacteriota</taxon>
        <taxon>Desulfuromonadia</taxon>
        <taxon>Geobacterales</taxon>
        <taxon>Geobacteraceae</taxon>
        <taxon>Geotalea</taxon>
    </lineage>
</organism>
<reference key="1">
    <citation type="submission" date="2007-05" db="EMBL/GenBank/DDBJ databases">
        <title>Complete sequence of Geobacter uraniireducens Rf4.</title>
        <authorList>
            <consortium name="US DOE Joint Genome Institute"/>
            <person name="Copeland A."/>
            <person name="Lucas S."/>
            <person name="Lapidus A."/>
            <person name="Barry K."/>
            <person name="Detter J.C."/>
            <person name="Glavina del Rio T."/>
            <person name="Hammon N."/>
            <person name="Israni S."/>
            <person name="Dalin E."/>
            <person name="Tice H."/>
            <person name="Pitluck S."/>
            <person name="Chertkov O."/>
            <person name="Brettin T."/>
            <person name="Bruce D."/>
            <person name="Han C."/>
            <person name="Schmutz J."/>
            <person name="Larimer F."/>
            <person name="Land M."/>
            <person name="Hauser L."/>
            <person name="Kyrpides N."/>
            <person name="Mikhailova N."/>
            <person name="Shelobolina E."/>
            <person name="Aklujkar M."/>
            <person name="Lovley D."/>
            <person name="Richardson P."/>
        </authorList>
    </citation>
    <scope>NUCLEOTIDE SEQUENCE [LARGE SCALE GENOMIC DNA]</scope>
    <source>
        <strain>ATCC BAA-1134 / JCM 13001 / Rf4</strain>
    </source>
</reference>